<feature type="chain" id="PRO_0000197500" description="Glutathione synthetase">
    <location>
        <begin position="1"/>
        <end position="319"/>
    </location>
</feature>
<feature type="domain" description="ATP-grasp" evidence="2">
    <location>
        <begin position="125"/>
        <end position="311"/>
    </location>
</feature>
<feature type="binding site" evidence="2">
    <location>
        <begin position="151"/>
        <end position="207"/>
    </location>
    <ligand>
        <name>ATP</name>
        <dbReference type="ChEBI" id="CHEBI:30616"/>
    </ligand>
</feature>
<feature type="binding site" evidence="2">
    <location>
        <position position="281"/>
    </location>
    <ligand>
        <name>Mg(2+)</name>
        <dbReference type="ChEBI" id="CHEBI:18420"/>
    </ligand>
</feature>
<feature type="binding site" evidence="2">
    <location>
        <position position="283"/>
    </location>
    <ligand>
        <name>Mg(2+)</name>
        <dbReference type="ChEBI" id="CHEBI:18420"/>
    </ligand>
</feature>
<comment type="catalytic activity">
    <reaction evidence="2">
        <text>gamma-L-glutamyl-L-cysteine + glycine + ATP = glutathione + ADP + phosphate + H(+)</text>
        <dbReference type="Rhea" id="RHEA:13557"/>
        <dbReference type="ChEBI" id="CHEBI:15378"/>
        <dbReference type="ChEBI" id="CHEBI:30616"/>
        <dbReference type="ChEBI" id="CHEBI:43474"/>
        <dbReference type="ChEBI" id="CHEBI:57305"/>
        <dbReference type="ChEBI" id="CHEBI:57925"/>
        <dbReference type="ChEBI" id="CHEBI:58173"/>
        <dbReference type="ChEBI" id="CHEBI:456216"/>
        <dbReference type="EC" id="6.3.2.3"/>
    </reaction>
</comment>
<comment type="cofactor">
    <cofactor evidence="1">
        <name>Mg(2+)</name>
        <dbReference type="ChEBI" id="CHEBI:18420"/>
    </cofactor>
    <cofactor evidence="1">
        <name>Mn(2+)</name>
        <dbReference type="ChEBI" id="CHEBI:29035"/>
    </cofactor>
    <text evidence="1">Binds 1 Mg(2+) or Mn(2+) ion per subunit.</text>
</comment>
<comment type="pathway">
    <text evidence="2">Sulfur metabolism; glutathione biosynthesis; glutathione from L-cysteine and L-glutamate: step 2/2.</text>
</comment>
<comment type="similarity">
    <text evidence="2">Belongs to the prokaryotic GSH synthase family.</text>
</comment>
<keyword id="KW-0067">ATP-binding</keyword>
<keyword id="KW-0317">Glutathione biosynthesis</keyword>
<keyword id="KW-0436">Ligase</keyword>
<keyword id="KW-0460">Magnesium</keyword>
<keyword id="KW-0464">Manganese</keyword>
<keyword id="KW-0479">Metal-binding</keyword>
<keyword id="KW-0547">Nucleotide-binding</keyword>
<keyword id="KW-1185">Reference proteome</keyword>
<protein>
    <recommendedName>
        <fullName evidence="2">Glutathione synthetase</fullName>
        <ecNumber evidence="2">6.3.2.3</ecNumber>
    </recommendedName>
    <alternativeName>
        <fullName evidence="2">GSH synthetase</fullName>
        <shortName evidence="2">GSH-S</shortName>
        <shortName evidence="2">GSHase</shortName>
    </alternativeName>
    <alternativeName>
        <fullName evidence="2">Glutathione synthase</fullName>
    </alternativeName>
</protein>
<gene>
    <name evidence="2" type="primary">gshB</name>
    <name type="ordered locus">YPO0935</name>
    <name type="ordered locus">y3321</name>
    <name type="ordered locus">YP_3507</name>
</gene>
<name>GSHB_YERPE</name>
<dbReference type="EC" id="6.3.2.3" evidence="2"/>
<dbReference type="EMBL" id="AL590842">
    <property type="protein sequence ID" value="CAL19601.1"/>
    <property type="molecule type" value="Genomic_DNA"/>
</dbReference>
<dbReference type="EMBL" id="AE009952">
    <property type="protein sequence ID" value="AAM86871.1"/>
    <property type="molecule type" value="Genomic_DNA"/>
</dbReference>
<dbReference type="EMBL" id="AE017042">
    <property type="protein sequence ID" value="AAS63661.1"/>
    <property type="molecule type" value="Genomic_DNA"/>
</dbReference>
<dbReference type="PIR" id="AG0114">
    <property type="entry name" value="AG0114"/>
</dbReference>
<dbReference type="RefSeq" id="WP_002209976.1">
    <property type="nucleotide sequence ID" value="NZ_WUCM01000030.1"/>
</dbReference>
<dbReference type="RefSeq" id="YP_002345982.1">
    <property type="nucleotide sequence ID" value="NC_003143.1"/>
</dbReference>
<dbReference type="SMR" id="P58582"/>
<dbReference type="IntAct" id="P58582">
    <property type="interactions" value="5"/>
</dbReference>
<dbReference type="STRING" id="214092.YPO0935"/>
<dbReference type="PaxDb" id="214092-YPO0935"/>
<dbReference type="DNASU" id="1148268"/>
<dbReference type="EnsemblBacteria" id="AAS63661">
    <property type="protein sequence ID" value="AAS63661"/>
    <property type="gene ID" value="YP_3507"/>
</dbReference>
<dbReference type="GeneID" id="57973706"/>
<dbReference type="KEGG" id="ype:YPO0935"/>
<dbReference type="KEGG" id="ypk:y3321"/>
<dbReference type="KEGG" id="ypm:YP_3507"/>
<dbReference type="PATRIC" id="fig|214092.21.peg.1213"/>
<dbReference type="eggNOG" id="COG0189">
    <property type="taxonomic scope" value="Bacteria"/>
</dbReference>
<dbReference type="HOGENOM" id="CLU_068239_0_0_6"/>
<dbReference type="OMA" id="IWMRKDP"/>
<dbReference type="OrthoDB" id="9785415at2"/>
<dbReference type="UniPathway" id="UPA00142">
    <property type="reaction ID" value="UER00210"/>
</dbReference>
<dbReference type="Proteomes" id="UP000000815">
    <property type="component" value="Chromosome"/>
</dbReference>
<dbReference type="Proteomes" id="UP000001019">
    <property type="component" value="Chromosome"/>
</dbReference>
<dbReference type="Proteomes" id="UP000002490">
    <property type="component" value="Chromosome"/>
</dbReference>
<dbReference type="GO" id="GO:0005737">
    <property type="term" value="C:cytoplasm"/>
    <property type="evidence" value="ECO:0000318"/>
    <property type="project" value="GO_Central"/>
</dbReference>
<dbReference type="GO" id="GO:0005524">
    <property type="term" value="F:ATP binding"/>
    <property type="evidence" value="ECO:0007669"/>
    <property type="project" value="UniProtKB-UniRule"/>
</dbReference>
<dbReference type="GO" id="GO:0004363">
    <property type="term" value="F:glutathione synthase activity"/>
    <property type="evidence" value="ECO:0000318"/>
    <property type="project" value="GO_Central"/>
</dbReference>
<dbReference type="GO" id="GO:0046872">
    <property type="term" value="F:metal ion binding"/>
    <property type="evidence" value="ECO:0007669"/>
    <property type="project" value="UniProtKB-KW"/>
</dbReference>
<dbReference type="FunFam" id="3.30.1490.20:FF:000009">
    <property type="entry name" value="Glutathione synthetase"/>
    <property type="match status" value="1"/>
</dbReference>
<dbReference type="FunFam" id="3.30.470.20:FF:000010">
    <property type="entry name" value="Glutathione synthetase"/>
    <property type="match status" value="1"/>
</dbReference>
<dbReference type="FunFam" id="3.40.50.20:FF:000009">
    <property type="entry name" value="Glutathione synthetase"/>
    <property type="match status" value="1"/>
</dbReference>
<dbReference type="Gene3D" id="3.40.50.20">
    <property type="match status" value="1"/>
</dbReference>
<dbReference type="Gene3D" id="3.30.1490.20">
    <property type="entry name" value="ATP-grasp fold, A domain"/>
    <property type="match status" value="1"/>
</dbReference>
<dbReference type="Gene3D" id="3.30.470.20">
    <property type="entry name" value="ATP-grasp fold, B domain"/>
    <property type="match status" value="1"/>
</dbReference>
<dbReference type="HAMAP" id="MF_00162">
    <property type="entry name" value="GSH_S"/>
    <property type="match status" value="1"/>
</dbReference>
<dbReference type="InterPro" id="IPR011761">
    <property type="entry name" value="ATP-grasp"/>
</dbReference>
<dbReference type="InterPro" id="IPR013815">
    <property type="entry name" value="ATP_grasp_subdomain_1"/>
</dbReference>
<dbReference type="InterPro" id="IPR006284">
    <property type="entry name" value="Glut_synth_pro"/>
</dbReference>
<dbReference type="InterPro" id="IPR004218">
    <property type="entry name" value="GSHS_ATP-bd"/>
</dbReference>
<dbReference type="InterPro" id="IPR004215">
    <property type="entry name" value="GSHS_N"/>
</dbReference>
<dbReference type="InterPro" id="IPR016185">
    <property type="entry name" value="PreATP-grasp_dom_sf"/>
</dbReference>
<dbReference type="NCBIfam" id="TIGR01380">
    <property type="entry name" value="glut_syn"/>
    <property type="match status" value="1"/>
</dbReference>
<dbReference type="NCBIfam" id="NF003573">
    <property type="entry name" value="PRK05246.1"/>
    <property type="match status" value="1"/>
</dbReference>
<dbReference type="PANTHER" id="PTHR21621:SF4">
    <property type="entry name" value="GLUTATHIONE SYNTHETASE"/>
    <property type="match status" value="1"/>
</dbReference>
<dbReference type="PANTHER" id="PTHR21621">
    <property type="entry name" value="RIBOSOMAL PROTEIN S6 MODIFICATION PROTEIN"/>
    <property type="match status" value="1"/>
</dbReference>
<dbReference type="Pfam" id="PF02955">
    <property type="entry name" value="GSH-S_ATP"/>
    <property type="match status" value="1"/>
</dbReference>
<dbReference type="Pfam" id="PF02951">
    <property type="entry name" value="GSH-S_N"/>
    <property type="match status" value="1"/>
</dbReference>
<dbReference type="SUPFAM" id="SSF56059">
    <property type="entry name" value="Glutathione synthetase ATP-binding domain-like"/>
    <property type="match status" value="1"/>
</dbReference>
<dbReference type="SUPFAM" id="SSF52440">
    <property type="entry name" value="PreATP-grasp domain"/>
    <property type="match status" value="1"/>
</dbReference>
<dbReference type="PROSITE" id="PS50975">
    <property type="entry name" value="ATP_GRASP"/>
    <property type="match status" value="1"/>
</dbReference>
<evidence type="ECO:0000250" key="1"/>
<evidence type="ECO:0000255" key="2">
    <source>
        <dbReference type="HAMAP-Rule" id="MF_00162"/>
    </source>
</evidence>
<accession>P58582</accession>
<accession>Q0WIA6</accession>
<sequence>MIKLGIVMDPISSINIKKDTSFAMLLEAQRRGWELHYMEMGDLYMRGGDGRARTRRLNVKQDKDNWFSFGAEQDLPLYDLDVILMRKDPPFDTEFIYATYILERAEDKGTLVVNKPQSLRDCNEKLFTAWFPELTPDTLVSRSKDHIRKFHQEHGDIILKPLDGMGGTSIFRVKQDDPNLSVIIETLTELSSRFCMAQNFLPAIKEGDKRVLVVDGEPVPYCLARIPAQGETRGNLAAGGRGEARPLSESDWEIARTVAPILKQKGLIFVGLDIIGDRLTEINVTSPTCVREIEAAFPEISITGMLMDAIERRLADKKA</sequence>
<reference key="1">
    <citation type="journal article" date="2001" name="Nature">
        <title>Genome sequence of Yersinia pestis, the causative agent of plague.</title>
        <authorList>
            <person name="Parkhill J."/>
            <person name="Wren B.W."/>
            <person name="Thomson N.R."/>
            <person name="Titball R.W."/>
            <person name="Holden M.T.G."/>
            <person name="Prentice M.B."/>
            <person name="Sebaihia M."/>
            <person name="James K.D."/>
            <person name="Churcher C.M."/>
            <person name="Mungall K.L."/>
            <person name="Baker S."/>
            <person name="Basham D."/>
            <person name="Bentley S.D."/>
            <person name="Brooks K."/>
            <person name="Cerdeno-Tarraga A.-M."/>
            <person name="Chillingworth T."/>
            <person name="Cronin A."/>
            <person name="Davies R.M."/>
            <person name="Davis P."/>
            <person name="Dougan G."/>
            <person name="Feltwell T."/>
            <person name="Hamlin N."/>
            <person name="Holroyd S."/>
            <person name="Jagels K."/>
            <person name="Karlyshev A.V."/>
            <person name="Leather S."/>
            <person name="Moule S."/>
            <person name="Oyston P.C.F."/>
            <person name="Quail M.A."/>
            <person name="Rutherford K.M."/>
            <person name="Simmonds M."/>
            <person name="Skelton J."/>
            <person name="Stevens K."/>
            <person name="Whitehead S."/>
            <person name="Barrell B.G."/>
        </authorList>
    </citation>
    <scope>NUCLEOTIDE SEQUENCE [LARGE SCALE GENOMIC DNA]</scope>
    <source>
        <strain>CO-92 / Biovar Orientalis</strain>
    </source>
</reference>
<reference key="2">
    <citation type="journal article" date="2002" name="J. Bacteriol.">
        <title>Genome sequence of Yersinia pestis KIM.</title>
        <authorList>
            <person name="Deng W."/>
            <person name="Burland V."/>
            <person name="Plunkett G. III"/>
            <person name="Boutin A."/>
            <person name="Mayhew G.F."/>
            <person name="Liss P."/>
            <person name="Perna N.T."/>
            <person name="Rose D.J."/>
            <person name="Mau B."/>
            <person name="Zhou S."/>
            <person name="Schwartz D.C."/>
            <person name="Fetherston J.D."/>
            <person name="Lindler L.E."/>
            <person name="Brubaker R.R."/>
            <person name="Plano G.V."/>
            <person name="Straley S.C."/>
            <person name="McDonough K.A."/>
            <person name="Nilles M.L."/>
            <person name="Matson J.S."/>
            <person name="Blattner F.R."/>
            <person name="Perry R.D."/>
        </authorList>
    </citation>
    <scope>NUCLEOTIDE SEQUENCE [LARGE SCALE GENOMIC DNA]</scope>
    <source>
        <strain>KIM10+ / Biovar Mediaevalis</strain>
    </source>
</reference>
<reference key="3">
    <citation type="journal article" date="2004" name="DNA Res.">
        <title>Complete genome sequence of Yersinia pestis strain 91001, an isolate avirulent to humans.</title>
        <authorList>
            <person name="Song Y."/>
            <person name="Tong Z."/>
            <person name="Wang J."/>
            <person name="Wang L."/>
            <person name="Guo Z."/>
            <person name="Han Y."/>
            <person name="Zhang J."/>
            <person name="Pei D."/>
            <person name="Zhou D."/>
            <person name="Qin H."/>
            <person name="Pang X."/>
            <person name="Han Y."/>
            <person name="Zhai J."/>
            <person name="Li M."/>
            <person name="Cui B."/>
            <person name="Qi Z."/>
            <person name="Jin L."/>
            <person name="Dai R."/>
            <person name="Chen F."/>
            <person name="Li S."/>
            <person name="Ye C."/>
            <person name="Du Z."/>
            <person name="Lin W."/>
            <person name="Wang J."/>
            <person name="Yu J."/>
            <person name="Yang H."/>
            <person name="Wang J."/>
            <person name="Huang P."/>
            <person name="Yang R."/>
        </authorList>
    </citation>
    <scope>NUCLEOTIDE SEQUENCE [LARGE SCALE GENOMIC DNA]</scope>
    <source>
        <strain>91001 / Biovar Mediaevalis</strain>
    </source>
</reference>
<proteinExistence type="inferred from homology"/>
<organism>
    <name type="scientific">Yersinia pestis</name>
    <dbReference type="NCBI Taxonomy" id="632"/>
    <lineage>
        <taxon>Bacteria</taxon>
        <taxon>Pseudomonadati</taxon>
        <taxon>Pseudomonadota</taxon>
        <taxon>Gammaproteobacteria</taxon>
        <taxon>Enterobacterales</taxon>
        <taxon>Yersiniaceae</taxon>
        <taxon>Yersinia</taxon>
    </lineage>
</organism>